<name>LACG_STAAE</name>
<sequence length="470" mass="54550">MTKTLPEDFIFGGATAAYQAEGATNTDGKGRVAWDTYLEENYWYTAEPASDFYNRYPVDLELSEKFGVNGIRISIAWSRIFPNGYGEVNPKGVEYYHKLFAECHKRHVEPFVTLHHFDTPEVLHKDGDFLNRKTIDYFVDYAEYCFKEFPEVKYWTTFNEIGPIGDGQYLVGKFPPGIKYDFEKVFQSHHNMMVAHARAVKLFKDGGYKGEIGVVHALPTKYPFDPSNPEDVRAAELEDIIHNKFILDATYLGKYSRETMEGVQHILSVNGGKLNITDEDYAILDAAKDLNDFLGINYYMSDWMRGYDGESEITHNATGDKGGSKYQLKGVGQREFDVDVPRTDWDWMIYPQGLYDQIMRVVKDYPNYHKIYITENGLGYKDEFIESEKTVHDDARIDYVRQHLNVIADAIIDGANVKGYFIWSLMDVFSWSNGYEKRYGLFYVDFETQERYPKKSAYWYKELAETKEIK</sequence>
<accession>A6QJ33</accession>
<proteinExistence type="inferred from homology"/>
<organism>
    <name type="scientific">Staphylococcus aureus (strain Newman)</name>
    <dbReference type="NCBI Taxonomy" id="426430"/>
    <lineage>
        <taxon>Bacteria</taxon>
        <taxon>Bacillati</taxon>
        <taxon>Bacillota</taxon>
        <taxon>Bacilli</taxon>
        <taxon>Bacillales</taxon>
        <taxon>Staphylococcaceae</taxon>
        <taxon>Staphylococcus</taxon>
    </lineage>
</organism>
<keyword id="KW-0326">Glycosidase</keyword>
<keyword id="KW-0378">Hydrolase</keyword>
<evidence type="ECO:0000255" key="1">
    <source>
        <dbReference type="HAMAP-Rule" id="MF_01574"/>
    </source>
</evidence>
<protein>
    <recommendedName>
        <fullName evidence="1">6-phospho-beta-galactosidase</fullName>
        <ecNumber evidence="1">3.2.1.85</ecNumber>
    </recommendedName>
    <alternativeName>
        <fullName evidence="1">Beta-D-phosphogalactoside galactohydrolase</fullName>
        <shortName evidence="1">PGALase</shortName>
    </alternativeName>
    <alternativeName>
        <fullName evidence="1">P-beta-Gal</fullName>
        <shortName evidence="1">PBG</shortName>
    </alternativeName>
</protein>
<dbReference type="EC" id="3.2.1.85" evidence="1"/>
<dbReference type="EMBL" id="AP009351">
    <property type="protein sequence ID" value="BAF68365.1"/>
    <property type="molecule type" value="Genomic_DNA"/>
</dbReference>
<dbReference type="RefSeq" id="WP_000169220.1">
    <property type="nucleotide sequence ID" value="NZ_JBBIAE010000006.1"/>
</dbReference>
<dbReference type="SMR" id="A6QJ33"/>
<dbReference type="CAZy" id="GH1">
    <property type="family name" value="Glycoside Hydrolase Family 1"/>
</dbReference>
<dbReference type="KEGG" id="sae:NWMN_2093"/>
<dbReference type="HOGENOM" id="CLU_001859_1_3_9"/>
<dbReference type="UniPathway" id="UPA00542">
    <property type="reaction ID" value="UER00605"/>
</dbReference>
<dbReference type="Proteomes" id="UP000006386">
    <property type="component" value="Chromosome"/>
</dbReference>
<dbReference type="GO" id="GO:0005829">
    <property type="term" value="C:cytosol"/>
    <property type="evidence" value="ECO:0007669"/>
    <property type="project" value="TreeGrafter"/>
</dbReference>
<dbReference type="GO" id="GO:0033920">
    <property type="term" value="F:6-phospho-beta-galactosidase activity"/>
    <property type="evidence" value="ECO:0007669"/>
    <property type="project" value="UniProtKB-UniRule"/>
</dbReference>
<dbReference type="GO" id="GO:0008422">
    <property type="term" value="F:beta-glucosidase activity"/>
    <property type="evidence" value="ECO:0007669"/>
    <property type="project" value="TreeGrafter"/>
</dbReference>
<dbReference type="GO" id="GO:0019512">
    <property type="term" value="P:lactose catabolic process via tagatose-6-phosphate"/>
    <property type="evidence" value="ECO:0007669"/>
    <property type="project" value="InterPro"/>
</dbReference>
<dbReference type="FunFam" id="3.20.20.80:FF:000004">
    <property type="entry name" value="Beta-glucosidase 6-phospho-beta-glucosidase"/>
    <property type="match status" value="1"/>
</dbReference>
<dbReference type="Gene3D" id="3.20.20.80">
    <property type="entry name" value="Glycosidases"/>
    <property type="match status" value="1"/>
</dbReference>
<dbReference type="HAMAP" id="MF_01574">
    <property type="entry name" value="LacG"/>
    <property type="match status" value="1"/>
</dbReference>
<dbReference type="InterPro" id="IPR005928">
    <property type="entry name" value="6P-beta-galactosidase"/>
</dbReference>
<dbReference type="InterPro" id="IPR001360">
    <property type="entry name" value="Glyco_hydro_1"/>
</dbReference>
<dbReference type="InterPro" id="IPR018120">
    <property type="entry name" value="Glyco_hydro_1_AS"/>
</dbReference>
<dbReference type="InterPro" id="IPR033132">
    <property type="entry name" value="Glyco_hydro_1_N_CS"/>
</dbReference>
<dbReference type="InterPro" id="IPR017853">
    <property type="entry name" value="Glycoside_hydrolase_SF"/>
</dbReference>
<dbReference type="NCBIfam" id="TIGR01233">
    <property type="entry name" value="lacG"/>
    <property type="match status" value="1"/>
</dbReference>
<dbReference type="NCBIfam" id="NF010036">
    <property type="entry name" value="PRK13511.1"/>
    <property type="match status" value="1"/>
</dbReference>
<dbReference type="PANTHER" id="PTHR10353">
    <property type="entry name" value="GLYCOSYL HYDROLASE"/>
    <property type="match status" value="1"/>
</dbReference>
<dbReference type="PANTHER" id="PTHR10353:SF36">
    <property type="entry name" value="LP05116P"/>
    <property type="match status" value="1"/>
</dbReference>
<dbReference type="Pfam" id="PF00232">
    <property type="entry name" value="Glyco_hydro_1"/>
    <property type="match status" value="1"/>
</dbReference>
<dbReference type="PRINTS" id="PR00131">
    <property type="entry name" value="GLHYDRLASE1"/>
</dbReference>
<dbReference type="SUPFAM" id="SSF51445">
    <property type="entry name" value="(Trans)glycosidases"/>
    <property type="match status" value="1"/>
</dbReference>
<dbReference type="PROSITE" id="PS00572">
    <property type="entry name" value="GLYCOSYL_HYDROL_F1_1"/>
    <property type="match status" value="1"/>
</dbReference>
<dbReference type="PROSITE" id="PS00653">
    <property type="entry name" value="GLYCOSYL_HYDROL_F1_2"/>
    <property type="match status" value="1"/>
</dbReference>
<feature type="chain" id="PRO_1000073602" description="6-phospho-beta-galactosidase">
    <location>
        <begin position="1"/>
        <end position="470"/>
    </location>
</feature>
<feature type="active site" description="Proton donor" evidence="1">
    <location>
        <position position="160"/>
    </location>
</feature>
<feature type="active site" description="Nucleophile" evidence="1">
    <location>
        <position position="375"/>
    </location>
</feature>
<feature type="binding site" evidence="1">
    <location>
        <position position="19"/>
    </location>
    <ligand>
        <name>D-galactose 6-phosphate</name>
        <dbReference type="ChEBI" id="CHEBI:91004"/>
    </ligand>
</feature>
<feature type="binding site" evidence="1">
    <location>
        <position position="116"/>
    </location>
    <ligand>
        <name>D-galactose 6-phosphate</name>
        <dbReference type="ChEBI" id="CHEBI:91004"/>
    </ligand>
</feature>
<feature type="binding site" evidence="1">
    <location>
        <position position="159"/>
    </location>
    <ligand>
        <name>D-galactose 6-phosphate</name>
        <dbReference type="ChEBI" id="CHEBI:91004"/>
    </ligand>
</feature>
<feature type="binding site" evidence="1">
    <location>
        <position position="160"/>
    </location>
    <ligand>
        <name>D-galactose 6-phosphate</name>
        <dbReference type="ChEBI" id="CHEBI:91004"/>
    </ligand>
</feature>
<feature type="binding site" evidence="1">
    <location>
        <position position="297"/>
    </location>
    <ligand>
        <name>D-galactose 6-phosphate</name>
        <dbReference type="ChEBI" id="CHEBI:91004"/>
    </ligand>
</feature>
<feature type="binding site" evidence="1">
    <location>
        <position position="430"/>
    </location>
    <ligand>
        <name>D-galactose 6-phosphate</name>
        <dbReference type="ChEBI" id="CHEBI:91004"/>
    </ligand>
</feature>
<feature type="binding site" evidence="1">
    <location>
        <position position="431"/>
    </location>
    <ligand>
        <name>D-galactose 6-phosphate</name>
        <dbReference type="ChEBI" id="CHEBI:91004"/>
    </ligand>
</feature>
<feature type="binding site" evidence="1">
    <location>
        <position position="437"/>
    </location>
    <ligand>
        <name>D-galactose 6-phosphate</name>
        <dbReference type="ChEBI" id="CHEBI:91004"/>
    </ligand>
</feature>
<feature type="binding site" evidence="1">
    <location>
        <position position="439"/>
    </location>
    <ligand>
        <name>D-galactose 6-phosphate</name>
        <dbReference type="ChEBI" id="CHEBI:91004"/>
    </ligand>
</feature>
<comment type="catalytic activity">
    <reaction evidence="1">
        <text>a 6-phospho-beta-D-galactoside + H2O = D-galactose 6-phosphate + an alcohol</text>
        <dbReference type="Rhea" id="RHEA:24568"/>
        <dbReference type="ChEBI" id="CHEBI:15377"/>
        <dbReference type="ChEBI" id="CHEBI:30879"/>
        <dbReference type="ChEBI" id="CHEBI:58534"/>
        <dbReference type="ChEBI" id="CHEBI:91004"/>
        <dbReference type="EC" id="3.2.1.85"/>
    </reaction>
</comment>
<comment type="pathway">
    <text evidence="1">Carbohydrate metabolism; lactose degradation; D-galactose 6-phosphate and beta-D-glucose from lactose 6-phosphate: step 1/1.</text>
</comment>
<comment type="similarity">
    <text evidence="1">Belongs to the glycosyl hydrolase 1 family.</text>
</comment>
<reference key="1">
    <citation type="journal article" date="2008" name="J. Bacteriol.">
        <title>Genome sequence of Staphylococcus aureus strain Newman and comparative analysis of staphylococcal genomes: polymorphism and evolution of two major pathogenicity islands.</title>
        <authorList>
            <person name="Baba T."/>
            <person name="Bae T."/>
            <person name="Schneewind O."/>
            <person name="Takeuchi F."/>
            <person name="Hiramatsu K."/>
        </authorList>
    </citation>
    <scope>NUCLEOTIDE SEQUENCE [LARGE SCALE GENOMIC DNA]</scope>
    <source>
        <strain>Newman</strain>
    </source>
</reference>
<gene>
    <name evidence="1" type="primary">lacG</name>
    <name type="ordered locus">NWMN_2093</name>
</gene>